<proteinExistence type="evidence at protein level"/>
<dbReference type="EMBL" id="X05015">
    <property type="protein sequence ID" value="CAA28670.1"/>
    <property type="molecule type" value="Genomic_DNA"/>
</dbReference>
<dbReference type="PIR" id="B26251">
    <property type="entry name" value="P2WL18"/>
</dbReference>
<dbReference type="RefSeq" id="NP_040316.1">
    <property type="nucleotide sequence ID" value="NC_001357.1"/>
</dbReference>
<dbReference type="PDB" id="8JOQ">
    <property type="method" value="X-ray"/>
    <property type="resolution" value="1.80 A"/>
    <property type="chains" value="B=209-215"/>
</dbReference>
<dbReference type="PDBsum" id="8JOQ"/>
<dbReference type="SMR" id="P06793"/>
<dbReference type="DNASU" id="1489091"/>
<dbReference type="GeneID" id="1489091"/>
<dbReference type="KEGG" id="vg:1489091"/>
<dbReference type="Proteomes" id="UP000009109">
    <property type="component" value="Genome"/>
</dbReference>
<dbReference type="GO" id="GO:0043657">
    <property type="term" value="C:host cell"/>
    <property type="evidence" value="ECO:0007669"/>
    <property type="project" value="GOC"/>
</dbReference>
<dbReference type="GO" id="GO:0044174">
    <property type="term" value="C:host cell endosome"/>
    <property type="evidence" value="ECO:0007669"/>
    <property type="project" value="UniProtKB-KW"/>
</dbReference>
<dbReference type="GO" id="GO:0044177">
    <property type="term" value="C:host cell Golgi apparatus"/>
    <property type="evidence" value="ECO:0007669"/>
    <property type="project" value="UniProtKB-SubCell"/>
</dbReference>
<dbReference type="GO" id="GO:0042025">
    <property type="term" value="C:host cell nucleus"/>
    <property type="evidence" value="ECO:0007669"/>
    <property type="project" value="UniProtKB-SubCell"/>
</dbReference>
<dbReference type="GO" id="GO:0019028">
    <property type="term" value="C:viral capsid"/>
    <property type="evidence" value="ECO:0007669"/>
    <property type="project" value="UniProtKB-UniRule"/>
</dbReference>
<dbReference type="GO" id="GO:0003677">
    <property type="term" value="F:DNA binding"/>
    <property type="evidence" value="ECO:0007669"/>
    <property type="project" value="UniProtKB-UniRule"/>
</dbReference>
<dbReference type="GO" id="GO:0005198">
    <property type="term" value="F:structural molecule activity"/>
    <property type="evidence" value="ECO:0007669"/>
    <property type="project" value="UniProtKB-UniRule"/>
</dbReference>
<dbReference type="GO" id="GO:0075521">
    <property type="term" value="P:microtubule-dependent intracellular transport of viral material towards nucleus"/>
    <property type="evidence" value="ECO:0007669"/>
    <property type="project" value="UniProtKB-UniRule"/>
</dbReference>
<dbReference type="GO" id="GO:0046718">
    <property type="term" value="P:symbiont entry into host cell"/>
    <property type="evidence" value="ECO:0007669"/>
    <property type="project" value="UniProtKB-KW"/>
</dbReference>
<dbReference type="GO" id="GO:0075732">
    <property type="term" value="P:viral penetration into host nucleus"/>
    <property type="evidence" value="ECO:0007669"/>
    <property type="project" value="UniProtKB-KW"/>
</dbReference>
<dbReference type="HAMAP" id="MF_04003">
    <property type="entry name" value="PPV_L2"/>
    <property type="match status" value="1"/>
</dbReference>
<dbReference type="InterPro" id="IPR000784">
    <property type="entry name" value="Late_L2"/>
</dbReference>
<dbReference type="Pfam" id="PF00513">
    <property type="entry name" value="Late_protein_L2"/>
    <property type="match status" value="1"/>
</dbReference>
<gene>
    <name evidence="1" type="primary">L2</name>
</gene>
<comment type="function">
    <text evidence="1">Minor protein of the capsid that localizes along the inner surface of the virion, within the central cavities beneath the L1 pentamers. Plays a role in capsid stabilization through interaction with the major capsid protein L1. Once the virion enters the host cell, L2 escorts the genomic DNA into the nucleus by promoting escape from the endosomal compartments and traffic through the host Golgi network. Mechanistically, the C-terminus of L2 possesses a cell-penetrating peptide that protudes from the host endosome, interacts with host cytoplasmic retromer cargo and thereby mediates the capsid delivery to the host trans-Golgi network. Plays a role through its interaction with host dynein in the intracellular microtubule-dependent transport of viral capsid toward the nucleus. Mediates the viral genome import into the nucleus through binding to host importins. Once within the nucleus, L2 localizes viral genomes to host PML bodies in order to activate early gene expression for establishment of infection. Later on, promotes late gene expression by interacting with the viral E2 protein and by inhibiting its transcriptional activation functions. During virion assembly, encapsidates the genome by direct interaction with the viral DNA.</text>
</comment>
<comment type="subunit">
    <text evidence="1">Interacts with major capsid protein L1. Interacts with E2; this interaction inhibits E2 transcriptional activity but not the DNA replication function E2. Interacts with host GADD45GIP1. Interacts with host HSPA8; this interaction is required for L2 nuclear translocation. Interacts with host importins KPNB2 and KPNB3. Forms a complex with importin alpha2-beta1 heterodimers via interaction with the importin alpha2 adapter. Interacts with host DYNLT1; this interaction is essential for virus intracellular transport during entry. Interacts (via C-terminus) with host retromer subunits VPS35 and VPS29.</text>
</comment>
<comment type="subcellular location">
    <subcellularLocation>
        <location evidence="1">Virion</location>
    </subcellularLocation>
    <subcellularLocation>
        <location evidence="1">Host nucleus</location>
    </subcellularLocation>
    <subcellularLocation>
        <location evidence="1">Host early endosome</location>
    </subcellularLocation>
    <subcellularLocation>
        <location evidence="1">Host Golgi apparatus</location>
    </subcellularLocation>
</comment>
<comment type="PTM">
    <text evidence="1">Highly phosphorylated.</text>
</comment>
<comment type="similarity">
    <text evidence="1">Belongs to the papillomaviridae L2 protein family.</text>
</comment>
<keyword id="KW-0002">3D-structure</keyword>
<keyword id="KW-0167">Capsid protein</keyword>
<keyword id="KW-1176">Cytoplasmic inwards viral transport</keyword>
<keyword id="KW-1015">Disulfide bond</keyword>
<keyword id="KW-0238">DNA-binding</keyword>
<keyword id="KW-1039">Host endosome</keyword>
<keyword id="KW-1040">Host Golgi apparatus</keyword>
<keyword id="KW-1048">Host nucleus</keyword>
<keyword id="KW-0945">Host-virus interaction</keyword>
<keyword id="KW-0426">Late protein</keyword>
<keyword id="KW-1177">Microtubular inwards viral transport</keyword>
<keyword id="KW-0597">Phosphoprotein</keyword>
<keyword id="KW-1185">Reference proteome</keyword>
<keyword id="KW-1163">Viral penetration into host nucleus</keyword>
<keyword id="KW-0946">Virion</keyword>
<keyword id="KW-1160">Virus entry into host cell</keyword>
<evidence type="ECO:0000255" key="1">
    <source>
        <dbReference type="HAMAP-Rule" id="MF_04003"/>
    </source>
</evidence>
<name>VL2_HPV18</name>
<organism>
    <name type="scientific">Human papillomavirus type 18</name>
    <dbReference type="NCBI Taxonomy" id="333761"/>
    <lineage>
        <taxon>Viruses</taxon>
        <taxon>Monodnaviria</taxon>
        <taxon>Shotokuvirae</taxon>
        <taxon>Cossaviricota</taxon>
        <taxon>Papovaviricetes</taxon>
        <taxon>Zurhausenvirales</taxon>
        <taxon>Papillomaviridae</taxon>
        <taxon>Firstpapillomavirinae</taxon>
        <taxon>Alphapapillomavirus</taxon>
        <taxon>Alphapapillomavirus 7</taxon>
    </lineage>
</organism>
<protein>
    <recommendedName>
        <fullName evidence="1">Minor capsid protein L2</fullName>
    </recommendedName>
</protein>
<accession>P06793</accession>
<feature type="chain" id="PRO_0000133585" description="Minor capsid protein L2">
    <location>
        <begin position="1"/>
        <end position="462"/>
    </location>
</feature>
<feature type="short sequence motif" description="Nuclear localization signal" evidence="1">
    <location>
        <begin position="1"/>
        <end position="12"/>
    </location>
</feature>
<feature type="short sequence motif" description="Nuclear localization signal" evidence="1">
    <location>
        <begin position="443"/>
        <end position="451"/>
    </location>
</feature>
<feature type="disulfide bond" evidence="1">
    <location>
        <begin position="21"/>
        <end position="27"/>
    </location>
</feature>
<organismHost>
    <name type="scientific">Homo sapiens</name>
    <name type="common">Human</name>
    <dbReference type="NCBI Taxonomy" id="9606"/>
</organismHost>
<sequence length="462" mass="49597">MVSHRAARRKRASVTDLYKTCKQSGTCPPDVVPKVEGTTLADKILQWSSLGIFLGGLGIGTGSGTGGRTGYIPLGGRSNTVVDVGPTRPPVVIEPVGPTDPSIVTLIEDSSVVTSGAPRPTFTGTSGFDITSAGTTTPAVLDITPSSTSVSISTTNFTNPAFSDPSIIEVPQTGEVAGNVFVGTPTSGTHGYEEIPLQTFASSGTGEEPISSTPLPTVRRVAGPRLYSRAYQQVSVANPEFLTRPSSLITYDNPAFEPVDTTLTFDPRSDVPDSDFMDIIRLHRPALTSRRGTVRFSRLGQRATMFTRSGTQIGARVHFYHDISPIAPSPEYIELQPLVSATEDNDLFDIYADDMDPAVPVPSRSTTSFAFFKYSPTISSASSYSNVTVPLTSSWDVPVYTGPDITLPSTTSVWPIVSPTAPASTQYIGIHGTHYYLWPLYYFIPKKRKRVPYFFADGFVAA</sequence>
<reference key="1">
    <citation type="journal article" date="1987" name="J. Mol. Biol.">
        <title>Nucleotide sequence and comparative analysis of the human papillomavirus type 18 genome. Phylogeny of papillomaviruses and repeated structure of the E6 and E7 gene products.</title>
        <authorList>
            <person name="Cole S.T."/>
            <person name="Danos O."/>
        </authorList>
    </citation>
    <scope>NUCLEOTIDE SEQUENCE [GENOMIC DNA]</scope>
</reference>